<accession>B3EWG9</accession>
<comment type="function">
    <text evidence="2 3 5 6">Catalyzes auto- and hetero-ADP ribosylation and produces short oligomers by elongating the ADP-ribose chain (up to 6-mer). Binds DNA non-specifically but with high affinity. Forms very stable complexes with circular DNA wherein the circular DNA confers thermostability compared to linear DNA.</text>
</comment>
<comment type="catalytic activity">
    <reaction evidence="6">
        <text>NAD(+) + (ADP-D-ribosyl)n-acceptor = nicotinamide + (ADP-D-ribosyl)n+1-acceptor + H(+).</text>
        <dbReference type="EC" id="2.4.2.30"/>
    </reaction>
</comment>
<comment type="activity regulation">
    <text evidence="1">Activity increases up to 5-6 times with Mg(2+) at 50 uM or higher ion concentration. 3-aminobenzamide (3-ABA) inhibits the activity by up to half and nicotinamide to a lesser extent. Zn(2+) inhibits the activity to half-maximal rate but at 500 uM concentration of the ion.</text>
</comment>
<comment type="biophysicochemical properties">
    <kinetics>
        <KM evidence="6">154 uM for NAD(+)</KM>
    </kinetics>
    <phDependence>
        <text evidence="6">Optimum pH is 6.5-10.</text>
    </phDependence>
    <temperatureDependence>
        <text evidence="6">Optimum temperature is 80 degrees Celsius. Activity decreases at 90-100 degrees Celsius.</text>
    </temperatureDependence>
</comment>
<keyword id="KW-0903">Direct protein sequencing</keyword>
<keyword id="KW-0238">DNA-binding</keyword>
<keyword id="KW-0328">Glycosyltransferase</keyword>
<keyword id="KW-0520">NAD</keyword>
<keyword id="KW-0548">Nucleotidyltransferase</keyword>
<keyword id="KW-0808">Transferase</keyword>
<name>PARP_SACSO</name>
<organism>
    <name type="scientific">Saccharolobus solfataricus</name>
    <name type="common">Sulfolobus solfataricus</name>
    <dbReference type="NCBI Taxonomy" id="2287"/>
    <lineage>
        <taxon>Archaea</taxon>
        <taxon>Thermoproteota</taxon>
        <taxon>Thermoprotei</taxon>
        <taxon>Sulfolobales</taxon>
        <taxon>Sulfolobaceae</taxon>
        <taxon>Saccharolobus</taxon>
    </lineage>
</organism>
<proteinExistence type="evidence at protein level"/>
<protein>
    <recommendedName>
        <fullName evidence="8">NAD(+) ADP-ribosyltransferase</fullName>
        <shortName evidence="8">PARPSss</shortName>
        <ecNumber evidence="6">2.4.2.30</ecNumber>
    </recommendedName>
    <alternativeName>
        <fullName evidence="8">Poly(ADP-ribose) polymerase-like thermozyme</fullName>
    </alternativeName>
</protein>
<dbReference type="EC" id="2.4.2.30" evidence="6"/>
<dbReference type="SMR" id="B3EWG9"/>
<dbReference type="BRENDA" id="2.4.2.30">
    <property type="organism ID" value="6163"/>
</dbReference>
<dbReference type="GO" id="GO:0003677">
    <property type="term" value="F:DNA binding"/>
    <property type="evidence" value="ECO:0007669"/>
    <property type="project" value="UniProtKB-KW"/>
</dbReference>
<dbReference type="GO" id="GO:0003950">
    <property type="term" value="F:NAD+ poly-ADP-ribosyltransferase activity"/>
    <property type="evidence" value="ECO:0007669"/>
    <property type="project" value="UniProtKB-EC"/>
</dbReference>
<dbReference type="GO" id="GO:0016779">
    <property type="term" value="F:nucleotidyltransferase activity"/>
    <property type="evidence" value="ECO:0007669"/>
    <property type="project" value="UniProtKB-KW"/>
</dbReference>
<dbReference type="Gene3D" id="3.40.190.10">
    <property type="entry name" value="Periplasmic binding protein-like II"/>
    <property type="match status" value="1"/>
</dbReference>
<dbReference type="SUPFAM" id="SSF53850">
    <property type="entry name" value="Periplasmic binding protein-like II"/>
    <property type="match status" value="1"/>
</dbReference>
<evidence type="ECO:0000269" key="1">
    <source>
    </source>
</evidence>
<evidence type="ECO:0000269" key="2">
    <source>
    </source>
</evidence>
<evidence type="ECO:0000269" key="3">
    <source>
    </source>
</evidence>
<evidence type="ECO:0000269" key="4">
    <source>
    </source>
</evidence>
<evidence type="ECO:0000269" key="5">
    <source>
    </source>
</evidence>
<evidence type="ECO:0000269" key="6">
    <source>
    </source>
</evidence>
<evidence type="ECO:0000303" key="7">
    <source>
    </source>
</evidence>
<evidence type="ECO:0000303" key="8">
    <source>
    </source>
</evidence>
<evidence type="ECO:0000305" key="9"/>
<sequence>DINGGGATLPQKLYQTSGVLTAGFAPYIGVGSGNGKAAFLTNDYTKLTATELSTYATNLQPTWGKLIQVPSVATSVAIPFRITDWSGISGAGRTGPITVVYRITYMSPDFAASTLAGLDDATKGVSPAPSNVSDAIAQVLPPNDPSAPLDVTNPDDGVAGVQPYPDSGYPILGFTNLIFSAFFTKAFFTKHFGDTNNNDDAITANRFVPLPDNWKTELSTYATNLQPTWGK</sequence>
<reference evidence="9" key="1">
    <citation type="journal article" date="2009" name="Biol. Chem.">
        <title>The ADP-ribosylating thermozyme from Sulfolobus solfataricus is a DING protein.</title>
        <authorList>
            <person name="Di Maro A."/>
            <person name="De Maio A."/>
            <person name="Castellano S."/>
            <person name="Parente A."/>
            <person name="Farina B."/>
            <person name="Faraone-Mennella M.R."/>
        </authorList>
    </citation>
    <scope>PROTEIN SEQUENCE</scope>
    <source>
        <strain evidence="4">DSM 5833 / MT-4</strain>
    </source>
</reference>
<reference evidence="9" key="2">
    <citation type="journal article" date="1996" name="FEBS Lett.">
        <title>Immunochemical detection of ADP-ribosylating enzymes in the archaeon Sulfolobus solfataricus.</title>
        <authorList>
            <person name="Faraone-Mennella M.R."/>
            <person name="Gambacorta A."/>
            <person name="Nicolaus B."/>
            <person name="Farina B."/>
        </authorList>
    </citation>
    <scope>FUNCTION</scope>
    <source>
        <strain evidence="5">DSM 5833 / MT-4</strain>
    </source>
</reference>
<reference evidence="9" key="3">
    <citation type="journal article" date="1998" name="Biochem. J.">
        <title>Purification and biochemical characterization of a poly(ADP-ribose) polymerase-like enzyme from the thermophilic archaeon Sulfolobus solfataricus.</title>
        <authorList>
            <person name="Faraone-Mennella M.R."/>
            <person name="Gambacorta A."/>
            <person name="Nicolaus B."/>
            <person name="Farina B."/>
        </authorList>
    </citation>
    <scope>FUNCTION</scope>
    <scope>CATALYTIC ACTIVITY</scope>
    <scope>BIOPHYSICOCHEMICAL PROPERTIES</scope>
    <source>
        <strain evidence="6">DSM 5833 / MT-4</strain>
    </source>
</reference>
<reference evidence="9" key="4">
    <citation type="journal article" date="2000" name="FEMS Microbiol. Lett.">
        <title>Comparison of the ADP-ribosylating thermozyme from Sulfolobus solfataricus and the mesophilic poly(ADP-ribose) polymerases.</title>
        <authorList>
            <person name="Faraone Mennella M.R."/>
            <person name="Castellano S."/>
            <person name="De Luca P."/>
            <person name="Discenza A."/>
            <person name="Gambacorta A."/>
            <person name="Nicolaus B."/>
            <person name="Farina B."/>
        </authorList>
    </citation>
    <scope>ACTIVITY REGULATION</scope>
    <source>
        <strain evidence="1">DSM 5833 / MT-4</strain>
    </source>
</reference>
<reference evidence="9" key="5">
    <citation type="journal article" date="2002" name="J. Cell. Biochem.">
        <title>Interaction of the ADP-ribosylating enzyme from the hyperthermophilic archaeon S. solfataricus with DNA and ss-oligo deoxy ribonucleotides.</title>
        <authorList>
            <person name="Faraone-Mennella M.R."/>
            <person name="Piccialli G."/>
            <person name="De Luca P."/>
            <person name="Castellano S."/>
            <person name="Giordano A."/>
            <person name="Rigano D."/>
            <person name="De Napoli L."/>
            <person name="Farina B."/>
        </authorList>
    </citation>
    <scope>FUNCTION</scope>
    <source>
        <strain evidence="2">DSM 5833 / MT-4</strain>
    </source>
</reference>
<reference evidence="9" key="6">
    <citation type="journal article" date="2002" name="J. Cell. Biochem.">
        <title>High stability binding of poly(ADPribose) polymerase-like thermozyme from S. solfataricus with circular DNA.</title>
        <authorList>
            <person name="Faraone-Mennella M.R."/>
            <person name="De Luca P."/>
            <person name="Giordano A."/>
            <person name="Gambacorta A."/>
            <person name="Nicolaus B."/>
            <person name="Farina B."/>
        </authorList>
    </citation>
    <scope>FUNCTION</scope>
    <source>
        <strain evidence="3">DSM 5833 / MT-4</strain>
    </source>
</reference>
<feature type="chain" id="PRO_0000416971" description="NAD(+) ADP-ribosyltransferase">
    <location>
        <begin position="1"/>
        <end position="231" status="greater than"/>
    </location>
</feature>
<feature type="non-consecutive residues" evidence="7">
    <location>
        <begin position="46"/>
        <end position="47"/>
    </location>
</feature>
<feature type="non-consecutive residues" evidence="7">
    <location>
        <begin position="81"/>
        <end position="82"/>
    </location>
</feature>
<feature type="non-consecutive residues" evidence="7">
    <location>
        <begin position="102"/>
        <end position="103"/>
    </location>
</feature>
<feature type="non-consecutive residues" evidence="7">
    <location>
        <begin position="129"/>
        <end position="130"/>
    </location>
</feature>
<feature type="non-consecutive residues" evidence="7">
    <location>
        <begin position="185"/>
        <end position="186"/>
    </location>
</feature>
<feature type="non-consecutive residues" evidence="7">
    <location>
        <begin position="215"/>
        <end position="216"/>
    </location>
</feature>
<feature type="non-terminal residue" evidence="7">
    <location>
        <position position="231"/>
    </location>
</feature>